<organism>
    <name type="scientific">Vibrio cholerae serotype O1 (strain ATCC 39315 / El Tor Inaba N16961)</name>
    <dbReference type="NCBI Taxonomy" id="243277"/>
    <lineage>
        <taxon>Bacteria</taxon>
        <taxon>Pseudomonadati</taxon>
        <taxon>Pseudomonadota</taxon>
        <taxon>Gammaproteobacteria</taxon>
        <taxon>Vibrionales</taxon>
        <taxon>Vibrionaceae</taxon>
        <taxon>Vibrio</taxon>
    </lineage>
</organism>
<protein>
    <recommendedName>
        <fullName evidence="2">CTP synthase</fullName>
        <ecNumber evidence="2">6.3.4.2</ecNumber>
    </recommendedName>
    <alternativeName>
        <fullName evidence="2">Cytidine 5'-triphosphate synthase</fullName>
    </alternativeName>
    <alternativeName>
        <fullName evidence="2">Cytidine triphosphate synthetase</fullName>
        <shortName evidence="2">CTP synthetase</shortName>
        <shortName evidence="2">CTPS</shortName>
    </alternativeName>
    <alternativeName>
        <fullName evidence="2">UTP--ammonia ligase</fullName>
    </alternativeName>
</protein>
<reference key="1">
    <citation type="journal article" date="2000" name="Nature">
        <title>DNA sequence of both chromosomes of the cholera pathogen Vibrio cholerae.</title>
        <authorList>
            <person name="Heidelberg J.F."/>
            <person name="Eisen J.A."/>
            <person name="Nelson W.C."/>
            <person name="Clayton R.A."/>
            <person name="Gwinn M.L."/>
            <person name="Dodson R.J."/>
            <person name="Haft D.H."/>
            <person name="Hickey E.K."/>
            <person name="Peterson J.D."/>
            <person name="Umayam L.A."/>
            <person name="Gill S.R."/>
            <person name="Nelson K.E."/>
            <person name="Read T.D."/>
            <person name="Tettelin H."/>
            <person name="Richardson D.L."/>
            <person name="Ermolaeva M.D."/>
            <person name="Vamathevan J.J."/>
            <person name="Bass S."/>
            <person name="Qin H."/>
            <person name="Dragoi I."/>
            <person name="Sellers P."/>
            <person name="McDonald L.A."/>
            <person name="Utterback T.R."/>
            <person name="Fleischmann R.D."/>
            <person name="Nierman W.C."/>
            <person name="White O."/>
            <person name="Salzberg S.L."/>
            <person name="Smith H.O."/>
            <person name="Colwell R.R."/>
            <person name="Mekalanos J.J."/>
            <person name="Venter J.C."/>
            <person name="Fraser C.M."/>
        </authorList>
    </citation>
    <scope>NUCLEOTIDE SEQUENCE [LARGE SCALE GENOMIC DNA]</scope>
    <source>
        <strain>ATCC 39315 / El Tor Inaba N16961</strain>
    </source>
</reference>
<dbReference type="EC" id="6.3.4.2" evidence="2"/>
<dbReference type="EMBL" id="AE003852">
    <property type="protein sequence ID" value="AAF95590.1"/>
    <property type="molecule type" value="Genomic_DNA"/>
</dbReference>
<dbReference type="PIR" id="E82074">
    <property type="entry name" value="E82074"/>
</dbReference>
<dbReference type="RefSeq" id="NP_232077.1">
    <property type="nucleotide sequence ID" value="NC_002505.1"/>
</dbReference>
<dbReference type="RefSeq" id="WP_000210846.1">
    <property type="nucleotide sequence ID" value="NZ_LT906614.1"/>
</dbReference>
<dbReference type="SMR" id="Q9KPC4"/>
<dbReference type="STRING" id="243277.VC_2448"/>
<dbReference type="MEROPS" id="C26.964"/>
<dbReference type="DNASU" id="2612990"/>
<dbReference type="EnsemblBacteria" id="AAF95590">
    <property type="protein sequence ID" value="AAF95590"/>
    <property type="gene ID" value="VC_2448"/>
</dbReference>
<dbReference type="KEGG" id="vch:VC_2448"/>
<dbReference type="PATRIC" id="fig|243277.26.peg.2333"/>
<dbReference type="eggNOG" id="COG0504">
    <property type="taxonomic scope" value="Bacteria"/>
</dbReference>
<dbReference type="HOGENOM" id="CLU_011675_5_0_6"/>
<dbReference type="UniPathway" id="UPA00159">
    <property type="reaction ID" value="UER00277"/>
</dbReference>
<dbReference type="Proteomes" id="UP000000584">
    <property type="component" value="Chromosome 1"/>
</dbReference>
<dbReference type="GO" id="GO:0005829">
    <property type="term" value="C:cytosol"/>
    <property type="evidence" value="ECO:0000318"/>
    <property type="project" value="GO_Central"/>
</dbReference>
<dbReference type="GO" id="GO:0005524">
    <property type="term" value="F:ATP binding"/>
    <property type="evidence" value="ECO:0007669"/>
    <property type="project" value="UniProtKB-KW"/>
</dbReference>
<dbReference type="GO" id="GO:0003883">
    <property type="term" value="F:CTP synthase activity"/>
    <property type="evidence" value="ECO:0000318"/>
    <property type="project" value="GO_Central"/>
</dbReference>
<dbReference type="GO" id="GO:0004359">
    <property type="term" value="F:glutaminase activity"/>
    <property type="evidence" value="ECO:0007669"/>
    <property type="project" value="RHEA"/>
</dbReference>
<dbReference type="GO" id="GO:0042802">
    <property type="term" value="F:identical protein binding"/>
    <property type="evidence" value="ECO:0000318"/>
    <property type="project" value="GO_Central"/>
</dbReference>
<dbReference type="GO" id="GO:0046872">
    <property type="term" value="F:metal ion binding"/>
    <property type="evidence" value="ECO:0007669"/>
    <property type="project" value="UniProtKB-KW"/>
</dbReference>
<dbReference type="GO" id="GO:0044210">
    <property type="term" value="P:'de novo' CTP biosynthetic process"/>
    <property type="evidence" value="ECO:0007669"/>
    <property type="project" value="UniProtKB-UniRule"/>
</dbReference>
<dbReference type="GO" id="GO:0006241">
    <property type="term" value="P:CTP biosynthetic process"/>
    <property type="evidence" value="ECO:0000318"/>
    <property type="project" value="GO_Central"/>
</dbReference>
<dbReference type="GO" id="GO:0019856">
    <property type="term" value="P:pyrimidine nucleobase biosynthetic process"/>
    <property type="evidence" value="ECO:0000318"/>
    <property type="project" value="GO_Central"/>
</dbReference>
<dbReference type="CDD" id="cd03113">
    <property type="entry name" value="CTPS_N"/>
    <property type="match status" value="1"/>
</dbReference>
<dbReference type="CDD" id="cd01746">
    <property type="entry name" value="GATase1_CTP_Synthase"/>
    <property type="match status" value="1"/>
</dbReference>
<dbReference type="FunFam" id="3.40.50.300:FF:000009">
    <property type="entry name" value="CTP synthase"/>
    <property type="match status" value="1"/>
</dbReference>
<dbReference type="FunFam" id="3.40.50.880:FF:000002">
    <property type="entry name" value="CTP synthase"/>
    <property type="match status" value="1"/>
</dbReference>
<dbReference type="Gene3D" id="3.40.50.880">
    <property type="match status" value="1"/>
</dbReference>
<dbReference type="Gene3D" id="3.40.50.300">
    <property type="entry name" value="P-loop containing nucleotide triphosphate hydrolases"/>
    <property type="match status" value="1"/>
</dbReference>
<dbReference type="HAMAP" id="MF_01227">
    <property type="entry name" value="PyrG"/>
    <property type="match status" value="1"/>
</dbReference>
<dbReference type="InterPro" id="IPR029062">
    <property type="entry name" value="Class_I_gatase-like"/>
</dbReference>
<dbReference type="InterPro" id="IPR004468">
    <property type="entry name" value="CTP_synthase"/>
</dbReference>
<dbReference type="InterPro" id="IPR017456">
    <property type="entry name" value="CTP_synthase_N"/>
</dbReference>
<dbReference type="InterPro" id="IPR017926">
    <property type="entry name" value="GATASE"/>
</dbReference>
<dbReference type="InterPro" id="IPR033828">
    <property type="entry name" value="GATase1_CTP_Synthase"/>
</dbReference>
<dbReference type="InterPro" id="IPR027417">
    <property type="entry name" value="P-loop_NTPase"/>
</dbReference>
<dbReference type="NCBIfam" id="NF003792">
    <property type="entry name" value="PRK05380.1"/>
    <property type="match status" value="1"/>
</dbReference>
<dbReference type="NCBIfam" id="TIGR00337">
    <property type="entry name" value="PyrG"/>
    <property type="match status" value="1"/>
</dbReference>
<dbReference type="PANTHER" id="PTHR11550">
    <property type="entry name" value="CTP SYNTHASE"/>
    <property type="match status" value="1"/>
</dbReference>
<dbReference type="PANTHER" id="PTHR11550:SF0">
    <property type="entry name" value="CTP SYNTHASE-RELATED"/>
    <property type="match status" value="1"/>
</dbReference>
<dbReference type="Pfam" id="PF06418">
    <property type="entry name" value="CTP_synth_N"/>
    <property type="match status" value="1"/>
</dbReference>
<dbReference type="Pfam" id="PF00117">
    <property type="entry name" value="GATase"/>
    <property type="match status" value="1"/>
</dbReference>
<dbReference type="SUPFAM" id="SSF52317">
    <property type="entry name" value="Class I glutamine amidotransferase-like"/>
    <property type="match status" value="1"/>
</dbReference>
<dbReference type="SUPFAM" id="SSF52540">
    <property type="entry name" value="P-loop containing nucleoside triphosphate hydrolases"/>
    <property type="match status" value="1"/>
</dbReference>
<dbReference type="PROSITE" id="PS51273">
    <property type="entry name" value="GATASE_TYPE_1"/>
    <property type="match status" value="1"/>
</dbReference>
<accession>Q9KPC4</accession>
<feature type="initiator methionine" description="Removed" evidence="1">
    <location>
        <position position="1"/>
    </location>
</feature>
<feature type="chain" id="PRO_0000138246" description="CTP synthase">
    <location>
        <begin position="2"/>
        <end position="545"/>
    </location>
</feature>
<feature type="domain" description="Glutamine amidotransferase type-1" evidence="2">
    <location>
        <begin position="291"/>
        <end position="542"/>
    </location>
</feature>
<feature type="region of interest" description="Amidoligase domain" evidence="2">
    <location>
        <begin position="2"/>
        <end position="266"/>
    </location>
</feature>
<feature type="active site" description="Nucleophile; for glutamine hydrolysis" evidence="2">
    <location>
        <position position="379"/>
    </location>
</feature>
<feature type="active site" evidence="2">
    <location>
        <position position="515"/>
    </location>
</feature>
<feature type="active site" evidence="2">
    <location>
        <position position="517"/>
    </location>
</feature>
<feature type="binding site" evidence="2">
    <location>
        <position position="14"/>
    </location>
    <ligand>
        <name>CTP</name>
        <dbReference type="ChEBI" id="CHEBI:37563"/>
        <note>allosteric inhibitor</note>
    </ligand>
</feature>
<feature type="binding site" evidence="2">
    <location>
        <position position="14"/>
    </location>
    <ligand>
        <name>UTP</name>
        <dbReference type="ChEBI" id="CHEBI:46398"/>
    </ligand>
</feature>
<feature type="binding site" evidence="2">
    <location>
        <begin position="15"/>
        <end position="20"/>
    </location>
    <ligand>
        <name>ATP</name>
        <dbReference type="ChEBI" id="CHEBI:30616"/>
    </ligand>
</feature>
<feature type="binding site" evidence="2">
    <location>
        <position position="72"/>
    </location>
    <ligand>
        <name>ATP</name>
        <dbReference type="ChEBI" id="CHEBI:30616"/>
    </ligand>
</feature>
<feature type="binding site" evidence="2">
    <location>
        <position position="72"/>
    </location>
    <ligand>
        <name>Mg(2+)</name>
        <dbReference type="ChEBI" id="CHEBI:18420"/>
    </ligand>
</feature>
<feature type="binding site" evidence="2">
    <location>
        <position position="140"/>
    </location>
    <ligand>
        <name>Mg(2+)</name>
        <dbReference type="ChEBI" id="CHEBI:18420"/>
    </ligand>
</feature>
<feature type="binding site" evidence="2">
    <location>
        <begin position="147"/>
        <end position="149"/>
    </location>
    <ligand>
        <name>CTP</name>
        <dbReference type="ChEBI" id="CHEBI:37563"/>
        <note>allosteric inhibitor</note>
    </ligand>
</feature>
<feature type="binding site" evidence="2">
    <location>
        <begin position="187"/>
        <end position="192"/>
    </location>
    <ligand>
        <name>CTP</name>
        <dbReference type="ChEBI" id="CHEBI:37563"/>
        <note>allosteric inhibitor</note>
    </ligand>
</feature>
<feature type="binding site" evidence="2">
    <location>
        <begin position="187"/>
        <end position="192"/>
    </location>
    <ligand>
        <name>UTP</name>
        <dbReference type="ChEBI" id="CHEBI:46398"/>
    </ligand>
</feature>
<feature type="binding site" evidence="2">
    <location>
        <position position="223"/>
    </location>
    <ligand>
        <name>CTP</name>
        <dbReference type="ChEBI" id="CHEBI:37563"/>
        <note>allosteric inhibitor</note>
    </ligand>
</feature>
<feature type="binding site" evidence="2">
    <location>
        <position position="223"/>
    </location>
    <ligand>
        <name>UTP</name>
        <dbReference type="ChEBI" id="CHEBI:46398"/>
    </ligand>
</feature>
<feature type="binding site" evidence="2">
    <location>
        <begin position="239"/>
        <end position="241"/>
    </location>
    <ligand>
        <name>ATP</name>
        <dbReference type="ChEBI" id="CHEBI:30616"/>
    </ligand>
</feature>
<feature type="binding site" evidence="2">
    <location>
        <position position="352"/>
    </location>
    <ligand>
        <name>L-glutamine</name>
        <dbReference type="ChEBI" id="CHEBI:58359"/>
    </ligand>
</feature>
<feature type="binding site" evidence="2">
    <location>
        <begin position="380"/>
        <end position="383"/>
    </location>
    <ligand>
        <name>L-glutamine</name>
        <dbReference type="ChEBI" id="CHEBI:58359"/>
    </ligand>
</feature>
<feature type="binding site" evidence="2">
    <location>
        <position position="403"/>
    </location>
    <ligand>
        <name>L-glutamine</name>
        <dbReference type="ChEBI" id="CHEBI:58359"/>
    </ligand>
</feature>
<feature type="binding site" evidence="2">
    <location>
        <position position="470"/>
    </location>
    <ligand>
        <name>L-glutamine</name>
        <dbReference type="ChEBI" id="CHEBI:58359"/>
    </ligand>
</feature>
<sequence length="545" mass="59886">MTTNYIFVTGGVVSSLGKGIAAASLAAILEARGLKVTMMKLDPYINVDPGTMSPTQHGEVFVTEDGAETDLDLGHYERFIRTKMTKRNNFTAGRVYADVLRKERRGDYLGATIQVIPHITNAIKDRVIAGSEGHDIAIVEVGGTVGDIESLPFMEAIRQLAIEVGREHAMFMHLTLVPYLAAAGEVKTKPTQHSVKELLSIGIQPDILVCRSDRMIPANERKKIALFCNVPEKAVISMKDVDSIYKIPQLIRSQGLDDLVCARFGINAPEADLSEWEQVIYEEANPTGEVTIGMVGKYTELPDAYKSVNEALKHAGLKNRLSVTIKYVDSQDVETKGTDVLNGLDAILVPGGFGDRGIEGKIRAAQYARENKIPYLGICLGMQVALIEYARNVAGMEGAHSTEFNKNTKYPVVGLITEWVDGEGNVEERSEKSDLGGTMRLGSQLCHLEKGTKAYELYGSATIHERHRHRYEVNNLLRPQIEKAGLKVSGLSADKKLVEVIENPAHPWFVAAQFHPEFTSTPRDGHPLFAGFVKAAGQFQRGELK</sequence>
<comment type="function">
    <text evidence="2">Catalyzes the ATP-dependent amination of UTP to CTP with either L-glutamine or ammonia as the source of nitrogen. Regulates intracellular CTP levels through interactions with the four ribonucleotide triphosphates.</text>
</comment>
<comment type="catalytic activity">
    <reaction evidence="2">
        <text>UTP + L-glutamine + ATP + H2O = CTP + L-glutamate + ADP + phosphate + 2 H(+)</text>
        <dbReference type="Rhea" id="RHEA:26426"/>
        <dbReference type="ChEBI" id="CHEBI:15377"/>
        <dbReference type="ChEBI" id="CHEBI:15378"/>
        <dbReference type="ChEBI" id="CHEBI:29985"/>
        <dbReference type="ChEBI" id="CHEBI:30616"/>
        <dbReference type="ChEBI" id="CHEBI:37563"/>
        <dbReference type="ChEBI" id="CHEBI:43474"/>
        <dbReference type="ChEBI" id="CHEBI:46398"/>
        <dbReference type="ChEBI" id="CHEBI:58359"/>
        <dbReference type="ChEBI" id="CHEBI:456216"/>
        <dbReference type="EC" id="6.3.4.2"/>
    </reaction>
</comment>
<comment type="catalytic activity">
    <reaction evidence="2">
        <text>L-glutamine + H2O = L-glutamate + NH4(+)</text>
        <dbReference type="Rhea" id="RHEA:15889"/>
        <dbReference type="ChEBI" id="CHEBI:15377"/>
        <dbReference type="ChEBI" id="CHEBI:28938"/>
        <dbReference type="ChEBI" id="CHEBI:29985"/>
        <dbReference type="ChEBI" id="CHEBI:58359"/>
    </reaction>
</comment>
<comment type="catalytic activity">
    <reaction evidence="2">
        <text>UTP + NH4(+) + ATP = CTP + ADP + phosphate + 2 H(+)</text>
        <dbReference type="Rhea" id="RHEA:16597"/>
        <dbReference type="ChEBI" id="CHEBI:15378"/>
        <dbReference type="ChEBI" id="CHEBI:28938"/>
        <dbReference type="ChEBI" id="CHEBI:30616"/>
        <dbReference type="ChEBI" id="CHEBI:37563"/>
        <dbReference type="ChEBI" id="CHEBI:43474"/>
        <dbReference type="ChEBI" id="CHEBI:46398"/>
        <dbReference type="ChEBI" id="CHEBI:456216"/>
    </reaction>
</comment>
<comment type="activity regulation">
    <text evidence="2">Allosterically activated by GTP, when glutamine is the substrate; GTP has no effect on the reaction when ammonia is the substrate. The allosteric effector GTP functions by stabilizing the protein conformation that binds the tetrahedral intermediate(s) formed during glutamine hydrolysis. Inhibited by the product CTP, via allosteric rather than competitive inhibition.</text>
</comment>
<comment type="pathway">
    <text evidence="2">Pyrimidine metabolism; CTP biosynthesis via de novo pathway; CTP from UDP: step 2/2.</text>
</comment>
<comment type="subunit">
    <text evidence="2">Homotetramer.</text>
</comment>
<comment type="miscellaneous">
    <text evidence="2">CTPSs have evolved a hybrid strategy for distinguishing between UTP and CTP. The overlapping regions of the product feedback inhibitory and substrate sites recognize a common feature in both compounds, the triphosphate moiety. To differentiate isosteric substrate and product pyrimidine rings, an additional pocket far from the expected kinase/ligase catalytic site, specifically recognizes the cytosine and ribose portions of the product inhibitor.</text>
</comment>
<comment type="similarity">
    <text evidence="2">Belongs to the CTP synthase family.</text>
</comment>
<keyword id="KW-0067">ATP-binding</keyword>
<keyword id="KW-0315">Glutamine amidotransferase</keyword>
<keyword id="KW-0436">Ligase</keyword>
<keyword id="KW-0460">Magnesium</keyword>
<keyword id="KW-0479">Metal-binding</keyword>
<keyword id="KW-0547">Nucleotide-binding</keyword>
<keyword id="KW-0665">Pyrimidine biosynthesis</keyword>
<keyword id="KW-1185">Reference proteome</keyword>
<gene>
    <name evidence="2" type="primary">pyrG</name>
    <name type="ordered locus">VC_2448</name>
</gene>
<evidence type="ECO:0000250" key="1"/>
<evidence type="ECO:0000255" key="2">
    <source>
        <dbReference type="HAMAP-Rule" id="MF_01227"/>
    </source>
</evidence>
<proteinExistence type="inferred from homology"/>
<name>PYRG_VIBCH</name>